<dbReference type="EC" id="3.1.1.31" evidence="1"/>
<dbReference type="EMBL" id="AC012329">
    <property type="protein sequence ID" value="AAG52194.1"/>
    <property type="molecule type" value="Genomic_DNA"/>
</dbReference>
<dbReference type="EMBL" id="AL132956">
    <property type="protein sequence ID" value="CAB66415.1"/>
    <property type="molecule type" value="Genomic_DNA"/>
</dbReference>
<dbReference type="EMBL" id="CP002686">
    <property type="protein sequence ID" value="AEE78532.1"/>
    <property type="molecule type" value="Genomic_DNA"/>
</dbReference>
<dbReference type="EMBL" id="AK117146">
    <property type="protein sequence ID" value="BAC41824.1"/>
    <property type="molecule type" value="mRNA"/>
</dbReference>
<dbReference type="EMBL" id="AY084434">
    <property type="protein sequence ID" value="AAM61007.1"/>
    <property type="molecule type" value="mRNA"/>
</dbReference>
<dbReference type="EMBL" id="BT024902">
    <property type="protein sequence ID" value="ABD91493.1"/>
    <property type="molecule type" value="mRNA"/>
</dbReference>
<dbReference type="PIR" id="T45841">
    <property type="entry name" value="T45841"/>
</dbReference>
<dbReference type="RefSeq" id="NP_190505.1">
    <property type="nucleotide sequence ID" value="NM_114796.4"/>
</dbReference>
<dbReference type="SMR" id="Q8LG70"/>
<dbReference type="FunCoup" id="Q8LG70">
    <property type="interactions" value="3488"/>
</dbReference>
<dbReference type="STRING" id="3702.Q8LG70"/>
<dbReference type="PaxDb" id="3702-AT3G49360.1"/>
<dbReference type="ProteomicsDB" id="245160"/>
<dbReference type="EnsemblPlants" id="AT3G49360.1">
    <property type="protein sequence ID" value="AT3G49360.1"/>
    <property type="gene ID" value="AT3G49360"/>
</dbReference>
<dbReference type="GeneID" id="824098"/>
<dbReference type="Gramene" id="AT3G49360.1">
    <property type="protein sequence ID" value="AT3G49360.1"/>
    <property type="gene ID" value="AT3G49360"/>
</dbReference>
<dbReference type="KEGG" id="ath:AT3G49360"/>
<dbReference type="Araport" id="AT3G49360"/>
<dbReference type="TAIR" id="AT3G49360">
    <property type="gene designation" value="PGL2"/>
</dbReference>
<dbReference type="eggNOG" id="KOG3147">
    <property type="taxonomic scope" value="Eukaryota"/>
</dbReference>
<dbReference type="HOGENOM" id="CLU_053947_0_0_1"/>
<dbReference type="InParanoid" id="Q8LG70"/>
<dbReference type="OMA" id="HGWCSIL"/>
<dbReference type="OrthoDB" id="432544at2759"/>
<dbReference type="PhylomeDB" id="Q8LG70"/>
<dbReference type="BioCyc" id="ARA:AT3G49360-MONOMER"/>
<dbReference type="BRENDA" id="3.1.1.31">
    <property type="organism ID" value="399"/>
</dbReference>
<dbReference type="UniPathway" id="UPA00115">
    <property type="reaction ID" value="UER00409"/>
</dbReference>
<dbReference type="PRO" id="PR:Q8LG70"/>
<dbReference type="Proteomes" id="UP000006548">
    <property type="component" value="Chromosome 3"/>
</dbReference>
<dbReference type="ExpressionAtlas" id="Q8LG70">
    <property type="expression patterns" value="baseline and differential"/>
</dbReference>
<dbReference type="GO" id="GO:0005829">
    <property type="term" value="C:cytosol"/>
    <property type="evidence" value="ECO:0000314"/>
    <property type="project" value="TAIR"/>
</dbReference>
<dbReference type="GO" id="GO:0000325">
    <property type="term" value="C:plant-type vacuole"/>
    <property type="evidence" value="ECO:0007005"/>
    <property type="project" value="TAIR"/>
</dbReference>
<dbReference type="GO" id="GO:0017057">
    <property type="term" value="F:6-phosphogluconolactonase activity"/>
    <property type="evidence" value="ECO:0007669"/>
    <property type="project" value="UniProtKB-EC"/>
</dbReference>
<dbReference type="GO" id="GO:0005975">
    <property type="term" value="P:carbohydrate metabolic process"/>
    <property type="evidence" value="ECO:0007669"/>
    <property type="project" value="InterPro"/>
</dbReference>
<dbReference type="GO" id="GO:0006098">
    <property type="term" value="P:pentose-phosphate shunt"/>
    <property type="evidence" value="ECO:0007669"/>
    <property type="project" value="UniProtKB-UniPathway"/>
</dbReference>
<dbReference type="CDD" id="cd01400">
    <property type="entry name" value="6PGL"/>
    <property type="match status" value="1"/>
</dbReference>
<dbReference type="FunFam" id="3.40.50.1360:FF:000009">
    <property type="entry name" value="Probable 6-phosphogluconolactonase"/>
    <property type="match status" value="1"/>
</dbReference>
<dbReference type="Gene3D" id="3.40.50.1360">
    <property type="match status" value="1"/>
</dbReference>
<dbReference type="InterPro" id="IPR005900">
    <property type="entry name" value="6-phosphogluconolactonase_DevB"/>
</dbReference>
<dbReference type="InterPro" id="IPR006148">
    <property type="entry name" value="Glc/Gal-6P_isomerase"/>
</dbReference>
<dbReference type="InterPro" id="IPR037171">
    <property type="entry name" value="NagB/RpiA_transferase-like"/>
</dbReference>
<dbReference type="InterPro" id="IPR039104">
    <property type="entry name" value="PGLS"/>
</dbReference>
<dbReference type="NCBIfam" id="TIGR01198">
    <property type="entry name" value="pgl"/>
    <property type="match status" value="1"/>
</dbReference>
<dbReference type="PANTHER" id="PTHR11054">
    <property type="entry name" value="6-PHOSPHOGLUCONOLACTONASE"/>
    <property type="match status" value="1"/>
</dbReference>
<dbReference type="PANTHER" id="PTHR11054:SF14">
    <property type="entry name" value="6-PHOSPHOGLUCONOLACTONASE 2-RELATED"/>
    <property type="match status" value="1"/>
</dbReference>
<dbReference type="Pfam" id="PF01182">
    <property type="entry name" value="Glucosamine_iso"/>
    <property type="match status" value="1"/>
</dbReference>
<dbReference type="SUPFAM" id="SSF100950">
    <property type="entry name" value="NagB/RpiA/CoA transferase-like"/>
    <property type="match status" value="1"/>
</dbReference>
<gene>
    <name evidence="4" type="primary">PGL2</name>
    <name evidence="6" type="ordered locus">At3g49360</name>
    <name evidence="8" type="ORF">F2K15.220</name>
    <name evidence="7" type="ORF">T1G12.6</name>
</gene>
<proteinExistence type="evidence at transcript level"/>
<name>6PGL2_ARATH</name>
<keyword id="KW-0963">Cytoplasm</keyword>
<keyword id="KW-0378">Hydrolase</keyword>
<keyword id="KW-1185">Reference proteome</keyword>
<organism>
    <name type="scientific">Arabidopsis thaliana</name>
    <name type="common">Mouse-ear cress</name>
    <dbReference type="NCBI Taxonomy" id="3702"/>
    <lineage>
        <taxon>Eukaryota</taxon>
        <taxon>Viridiplantae</taxon>
        <taxon>Streptophyta</taxon>
        <taxon>Embryophyta</taxon>
        <taxon>Tracheophyta</taxon>
        <taxon>Spermatophyta</taxon>
        <taxon>Magnoliopsida</taxon>
        <taxon>eudicotyledons</taxon>
        <taxon>Gunneridae</taxon>
        <taxon>Pentapetalae</taxon>
        <taxon>rosids</taxon>
        <taxon>malvids</taxon>
        <taxon>Brassicales</taxon>
        <taxon>Brassicaceae</taxon>
        <taxon>Camelineae</taxon>
        <taxon>Arabidopsis</taxon>
    </lineage>
</organism>
<feature type="chain" id="PRO_0000288669" description="Probable 6-phosphogluconolactonase 2">
    <location>
        <begin position="1"/>
        <end position="259"/>
    </location>
</feature>
<feature type="sequence conflict" description="In Ref. 4; AAM61007." evidence="5" ref="4">
    <original>G</original>
    <variation>E</variation>
    <location>
        <position position="35"/>
    </location>
</feature>
<feature type="sequence conflict" description="In Ref. 4; AAM61007." evidence="5" ref="4">
    <original>S</original>
    <variation>Y</variation>
    <location>
        <position position="42"/>
    </location>
</feature>
<feature type="sequence conflict" description="In Ref. 4; AAM61007." evidence="5" ref="4">
    <original>V</original>
    <variation>I</variation>
    <location>
        <position position="99"/>
    </location>
</feature>
<feature type="sequence conflict" description="In Ref. 4; AAM61007." evidence="5" ref="4">
    <original>D</original>
    <variation>N</variation>
    <location>
        <position position="108"/>
    </location>
</feature>
<feature type="sequence conflict" description="In Ref. 4; AAM61007." evidence="5" ref="4">
    <original>L</original>
    <variation>F</variation>
    <location>
        <position position="194"/>
    </location>
</feature>
<feature type="sequence conflict" description="In Ref. 4; AAM61007." evidence="5" ref="4">
    <original>V</original>
    <variation>A</variation>
    <location>
        <position position="218"/>
    </location>
</feature>
<reference key="1">
    <citation type="journal article" date="2000" name="Nature">
        <title>Sequence and analysis of chromosome 3 of the plant Arabidopsis thaliana.</title>
        <authorList>
            <person name="Salanoubat M."/>
            <person name="Lemcke K."/>
            <person name="Rieger M."/>
            <person name="Ansorge W."/>
            <person name="Unseld M."/>
            <person name="Fartmann B."/>
            <person name="Valle G."/>
            <person name="Bloecker H."/>
            <person name="Perez-Alonso M."/>
            <person name="Obermaier B."/>
            <person name="Delseny M."/>
            <person name="Boutry M."/>
            <person name="Grivell L.A."/>
            <person name="Mache R."/>
            <person name="Puigdomenech P."/>
            <person name="De Simone V."/>
            <person name="Choisne N."/>
            <person name="Artiguenave F."/>
            <person name="Robert C."/>
            <person name="Brottier P."/>
            <person name="Wincker P."/>
            <person name="Cattolico L."/>
            <person name="Weissenbach J."/>
            <person name="Saurin W."/>
            <person name="Quetier F."/>
            <person name="Schaefer M."/>
            <person name="Mueller-Auer S."/>
            <person name="Gabel C."/>
            <person name="Fuchs M."/>
            <person name="Benes V."/>
            <person name="Wurmbach E."/>
            <person name="Drzonek H."/>
            <person name="Erfle H."/>
            <person name="Jordan N."/>
            <person name="Bangert S."/>
            <person name="Wiedelmann R."/>
            <person name="Kranz H."/>
            <person name="Voss H."/>
            <person name="Holland R."/>
            <person name="Brandt P."/>
            <person name="Nyakatura G."/>
            <person name="Vezzi A."/>
            <person name="D'Angelo M."/>
            <person name="Pallavicini A."/>
            <person name="Toppo S."/>
            <person name="Simionati B."/>
            <person name="Conrad A."/>
            <person name="Hornischer K."/>
            <person name="Kauer G."/>
            <person name="Loehnert T.-H."/>
            <person name="Nordsiek G."/>
            <person name="Reichelt J."/>
            <person name="Scharfe M."/>
            <person name="Schoen O."/>
            <person name="Bargues M."/>
            <person name="Terol J."/>
            <person name="Climent J."/>
            <person name="Navarro P."/>
            <person name="Collado C."/>
            <person name="Perez-Perez A."/>
            <person name="Ottenwaelder B."/>
            <person name="Duchemin D."/>
            <person name="Cooke R."/>
            <person name="Laudie M."/>
            <person name="Berger-Llauro C."/>
            <person name="Purnelle B."/>
            <person name="Masuy D."/>
            <person name="de Haan M."/>
            <person name="Maarse A.C."/>
            <person name="Alcaraz J.-P."/>
            <person name="Cottet A."/>
            <person name="Casacuberta E."/>
            <person name="Monfort A."/>
            <person name="Argiriou A."/>
            <person name="Flores M."/>
            <person name="Liguori R."/>
            <person name="Vitale D."/>
            <person name="Mannhaupt G."/>
            <person name="Haase D."/>
            <person name="Schoof H."/>
            <person name="Rudd S."/>
            <person name="Zaccaria P."/>
            <person name="Mewes H.-W."/>
            <person name="Mayer K.F.X."/>
            <person name="Kaul S."/>
            <person name="Town C.D."/>
            <person name="Koo H.L."/>
            <person name="Tallon L.J."/>
            <person name="Jenkins J."/>
            <person name="Rooney T."/>
            <person name="Rizzo M."/>
            <person name="Walts A."/>
            <person name="Utterback T."/>
            <person name="Fujii C.Y."/>
            <person name="Shea T.P."/>
            <person name="Creasy T.H."/>
            <person name="Haas B."/>
            <person name="Maiti R."/>
            <person name="Wu D."/>
            <person name="Peterson J."/>
            <person name="Van Aken S."/>
            <person name="Pai G."/>
            <person name="Militscher J."/>
            <person name="Sellers P."/>
            <person name="Gill J.E."/>
            <person name="Feldblyum T.V."/>
            <person name="Preuss D."/>
            <person name="Lin X."/>
            <person name="Nierman W.C."/>
            <person name="Salzberg S.L."/>
            <person name="White O."/>
            <person name="Venter J.C."/>
            <person name="Fraser C.M."/>
            <person name="Kaneko T."/>
            <person name="Nakamura Y."/>
            <person name="Sato S."/>
            <person name="Kato T."/>
            <person name="Asamizu E."/>
            <person name="Sasamoto S."/>
            <person name="Kimura T."/>
            <person name="Idesawa K."/>
            <person name="Kawashima K."/>
            <person name="Kishida Y."/>
            <person name="Kiyokawa C."/>
            <person name="Kohara M."/>
            <person name="Matsumoto M."/>
            <person name="Matsuno A."/>
            <person name="Muraki A."/>
            <person name="Nakayama S."/>
            <person name="Nakazaki N."/>
            <person name="Shinpo S."/>
            <person name="Takeuchi C."/>
            <person name="Wada T."/>
            <person name="Watanabe A."/>
            <person name="Yamada M."/>
            <person name="Yasuda M."/>
            <person name="Tabata S."/>
        </authorList>
    </citation>
    <scope>NUCLEOTIDE SEQUENCE [LARGE SCALE GENOMIC DNA]</scope>
    <source>
        <strain>cv. Columbia</strain>
    </source>
</reference>
<reference key="2">
    <citation type="journal article" date="2017" name="Plant J.">
        <title>Araport11: a complete reannotation of the Arabidopsis thaliana reference genome.</title>
        <authorList>
            <person name="Cheng C.Y."/>
            <person name="Krishnakumar V."/>
            <person name="Chan A.P."/>
            <person name="Thibaud-Nissen F."/>
            <person name="Schobel S."/>
            <person name="Town C.D."/>
        </authorList>
    </citation>
    <scope>GENOME REANNOTATION</scope>
    <source>
        <strain>cv. Columbia</strain>
    </source>
</reference>
<reference key="3">
    <citation type="journal article" date="2002" name="Science">
        <title>Functional annotation of a full-length Arabidopsis cDNA collection.</title>
        <authorList>
            <person name="Seki M."/>
            <person name="Narusaka M."/>
            <person name="Kamiya A."/>
            <person name="Ishida J."/>
            <person name="Satou M."/>
            <person name="Sakurai T."/>
            <person name="Nakajima M."/>
            <person name="Enju A."/>
            <person name="Akiyama K."/>
            <person name="Oono Y."/>
            <person name="Muramatsu M."/>
            <person name="Hayashizaki Y."/>
            <person name="Kawai J."/>
            <person name="Carninci P."/>
            <person name="Itoh M."/>
            <person name="Ishii Y."/>
            <person name="Arakawa T."/>
            <person name="Shibata K."/>
            <person name="Shinagawa A."/>
            <person name="Shinozaki K."/>
        </authorList>
    </citation>
    <scope>NUCLEOTIDE SEQUENCE [LARGE SCALE MRNA]</scope>
    <source>
        <strain>cv. Columbia</strain>
    </source>
</reference>
<reference key="4">
    <citation type="submission" date="2002-03" db="EMBL/GenBank/DDBJ databases">
        <title>Full-length cDNA from Arabidopsis thaliana.</title>
        <authorList>
            <person name="Brover V.V."/>
            <person name="Troukhan M.E."/>
            <person name="Alexandrov N.A."/>
            <person name="Lu Y.-P."/>
            <person name="Flavell R.B."/>
            <person name="Feldmann K.A."/>
        </authorList>
    </citation>
    <scope>NUCLEOTIDE SEQUENCE [LARGE SCALE MRNA]</scope>
</reference>
<reference key="5">
    <citation type="submission" date="2006-03" db="EMBL/GenBank/DDBJ databases">
        <title>Arabidopsis ORF clones.</title>
        <authorList>
            <person name="Shinn P."/>
            <person name="Chen H."/>
            <person name="Kim C.J."/>
            <person name="Ecker J.R."/>
        </authorList>
    </citation>
    <scope>NUCLEOTIDE SEQUENCE [LARGE SCALE MRNA]</scope>
    <source>
        <strain>cv. Columbia</strain>
    </source>
</reference>
<reference key="6">
    <citation type="journal article" date="2009" name="Plant Cell Physiol.">
        <title>Characterization of Arabidopsis 6-phosphogluconolactonase T-DNA insertion mutants reveals an essential role for the oxidative section of the plastidic pentose phosphate pathway in plant growth and development.</title>
        <authorList>
            <person name="Xiong Y."/>
            <person name="DeFraia C."/>
            <person name="Williams D."/>
            <person name="Zhang X."/>
            <person name="Mou Z."/>
        </authorList>
    </citation>
    <scope>GENE FAMILY</scope>
    <scope>NOMENCLATURE</scope>
    <scope>DISRUPTION PHENOTYPE</scope>
</reference>
<reference key="7">
    <citation type="journal article" date="2014" name="Mol. Plant">
        <title>Dual-targeting of Arabidopsis 6-phosphogluconolactonase 3 (PGL3) to chloroplasts and peroxisomes involves interaction with Trx m2 in the cytosol.</title>
        <authorList>
            <person name="Hoelscher C."/>
            <person name="Meyer T."/>
            <person name="von Schaewen A."/>
        </authorList>
    </citation>
    <scope>SUBCELLULAR LOCATION</scope>
</reference>
<comment type="function">
    <text evidence="1">Catalyzes the hydrolysis of 6-phosphogluconolactone to 6-phosphogluconate.</text>
</comment>
<comment type="catalytic activity">
    <reaction evidence="1">
        <text>6-phospho-D-glucono-1,5-lactone + H2O = 6-phospho-D-gluconate + H(+)</text>
        <dbReference type="Rhea" id="RHEA:12556"/>
        <dbReference type="ChEBI" id="CHEBI:15377"/>
        <dbReference type="ChEBI" id="CHEBI:15378"/>
        <dbReference type="ChEBI" id="CHEBI:57955"/>
        <dbReference type="ChEBI" id="CHEBI:58759"/>
        <dbReference type="EC" id="3.1.1.31"/>
    </reaction>
</comment>
<comment type="pathway">
    <text evidence="5">Carbohydrate degradation; pentose phosphate pathway; D-ribulose 5-phosphate from D-glucose 6-phosphate (oxidative stage): step 2/3.</text>
</comment>
<comment type="subcellular location">
    <subcellularLocation>
        <location evidence="3">Cytoplasm</location>
        <location evidence="3">Cytosol</location>
    </subcellularLocation>
</comment>
<comment type="disruption phenotype">
    <text evidence="2">No visible phenotype under normal growth conditions.</text>
</comment>
<comment type="similarity">
    <text evidence="5">Belongs to the glucosamine/galactosamine-6-phosphate isomerase family. 6-phosphogluconolactonase subfamily.</text>
</comment>
<protein>
    <recommendedName>
        <fullName evidence="5">Probable 6-phosphogluconolactonase 2</fullName>
        <shortName evidence="5">6PGL2</shortName>
        <ecNumber evidence="1">3.1.1.31</ecNumber>
    </recommendedName>
</protein>
<accession>Q8LG70</accession>
<accession>Q9SG13</accession>
<evidence type="ECO:0000250" key="1">
    <source>
        <dbReference type="UniProtKB" id="Q84WW2"/>
    </source>
</evidence>
<evidence type="ECO:0000269" key="2">
    <source>
    </source>
</evidence>
<evidence type="ECO:0000269" key="3">
    <source>
    </source>
</evidence>
<evidence type="ECO:0000303" key="4">
    <source>
    </source>
</evidence>
<evidence type="ECO:0000305" key="5"/>
<evidence type="ECO:0000312" key="6">
    <source>
        <dbReference type="Araport" id="AT3G49360"/>
    </source>
</evidence>
<evidence type="ECO:0000312" key="7">
    <source>
        <dbReference type="EMBL" id="AAG52194.1"/>
    </source>
</evidence>
<evidence type="ECO:0000312" key="8">
    <source>
        <dbReference type="EMBL" id="CAB66415.1"/>
    </source>
</evidence>
<sequence>MAPVKRRVFKTNNEMAVELAKYTADLSSKFCKERGVFTVVLSGGDLIAWLWKLLEAPYIDSIEWSKWHIFWVDERVCAWDHADSNYKLAYDGFLSKVPVPAENIYAIDNGLGAEGNAELAAERYEECLKQKVNQNIIRTYKSSGFPQFDLQLLGMGPDGHMASLFPGHAQINEKVKWVTSITDSPKPPSKRITLTLPVINCASYNVMAVCDKEQADSVAAALNHTKDLPAGRLTADVEVVWFLDQAAASKLPHGWCSIL</sequence>